<protein>
    <recommendedName>
        <fullName>Peptide methionine sulfoxide reductase MsrA 2</fullName>
        <shortName>Protein-methionine-S-oxide reductase 2</shortName>
        <ecNumber>1.8.4.11</ecNumber>
    </recommendedName>
    <alternativeName>
        <fullName>Peptide-methionine (S)-S-oxide reductase 2</fullName>
        <shortName>Peptide Met(O) reductase 2</shortName>
    </alternativeName>
</protein>
<proteinExistence type="inferred from homology"/>
<comment type="function">
    <text evidence="1">Has an important function as a repair enzyme for proteins that have been inactivated by oxidation. Catalyzes the reversible oxidation-reduction of methionine sulfoxide in proteins to methionine (By similarity).</text>
</comment>
<comment type="catalytic activity">
    <reaction>
        <text>L-methionyl-[protein] + [thioredoxin]-disulfide + H2O = L-methionyl-(S)-S-oxide-[protein] + [thioredoxin]-dithiol</text>
        <dbReference type="Rhea" id="RHEA:14217"/>
        <dbReference type="Rhea" id="RHEA-COMP:10698"/>
        <dbReference type="Rhea" id="RHEA-COMP:10700"/>
        <dbReference type="Rhea" id="RHEA-COMP:12313"/>
        <dbReference type="Rhea" id="RHEA-COMP:12315"/>
        <dbReference type="ChEBI" id="CHEBI:15377"/>
        <dbReference type="ChEBI" id="CHEBI:16044"/>
        <dbReference type="ChEBI" id="CHEBI:29950"/>
        <dbReference type="ChEBI" id="CHEBI:44120"/>
        <dbReference type="ChEBI" id="CHEBI:50058"/>
        <dbReference type="EC" id="1.8.4.11"/>
    </reaction>
</comment>
<comment type="catalytic activity">
    <reaction>
        <text>[thioredoxin]-disulfide + L-methionine + H2O = L-methionine (S)-S-oxide + [thioredoxin]-dithiol</text>
        <dbReference type="Rhea" id="RHEA:19993"/>
        <dbReference type="Rhea" id="RHEA-COMP:10698"/>
        <dbReference type="Rhea" id="RHEA-COMP:10700"/>
        <dbReference type="ChEBI" id="CHEBI:15377"/>
        <dbReference type="ChEBI" id="CHEBI:29950"/>
        <dbReference type="ChEBI" id="CHEBI:50058"/>
        <dbReference type="ChEBI" id="CHEBI:57844"/>
        <dbReference type="ChEBI" id="CHEBI:58772"/>
        <dbReference type="EC" id="1.8.4.11"/>
    </reaction>
</comment>
<comment type="similarity">
    <text evidence="2">Belongs to the MsrA Met sulfoxide reductase family.</text>
</comment>
<name>MSRA2_NOSS1</name>
<organism>
    <name type="scientific">Nostoc sp. (strain PCC 7120 / SAG 25.82 / UTEX 2576)</name>
    <dbReference type="NCBI Taxonomy" id="103690"/>
    <lineage>
        <taxon>Bacteria</taxon>
        <taxon>Bacillati</taxon>
        <taxon>Cyanobacteriota</taxon>
        <taxon>Cyanophyceae</taxon>
        <taxon>Nostocales</taxon>
        <taxon>Nostocaceae</taxon>
        <taxon>Nostoc</taxon>
    </lineage>
</organism>
<accession>Q8YWD8</accession>
<evidence type="ECO:0000250" key="1"/>
<evidence type="ECO:0000305" key="2"/>
<keyword id="KW-0560">Oxidoreductase</keyword>
<keyword id="KW-1185">Reference proteome</keyword>
<sequence length="222" mass="24358">MALFGFGKKLALPTPEKALPGRAQIMPVPANHYVNKNPLKPPFPDGFEKALFGLGCFWGAERKFWQQQGVYSTAVGYAAGFTPNPTYDEVCTGLTGHNEVVLVVFDPKVISYTQLLKVFWESHNPTQGMRQGNDVGTQYRSGIYVYSEAQKQLAEASRDAYQQALSSAGYEKITTEILDAPEFYYAEAYHQQYLAKNPNGYCGLGGTNVACPVGVFESSANG</sequence>
<reference key="1">
    <citation type="journal article" date="2001" name="DNA Res.">
        <title>Complete genomic sequence of the filamentous nitrogen-fixing cyanobacterium Anabaena sp. strain PCC 7120.</title>
        <authorList>
            <person name="Kaneko T."/>
            <person name="Nakamura Y."/>
            <person name="Wolk C.P."/>
            <person name="Kuritz T."/>
            <person name="Sasamoto S."/>
            <person name="Watanabe A."/>
            <person name="Iriguchi M."/>
            <person name="Ishikawa A."/>
            <person name="Kawashima K."/>
            <person name="Kimura T."/>
            <person name="Kishida Y."/>
            <person name="Kohara M."/>
            <person name="Matsumoto M."/>
            <person name="Matsuno A."/>
            <person name="Muraki A."/>
            <person name="Nakazaki N."/>
            <person name="Shimpo S."/>
            <person name="Sugimoto M."/>
            <person name="Takazawa M."/>
            <person name="Yamada M."/>
            <person name="Yasuda M."/>
            <person name="Tabata S."/>
        </authorList>
    </citation>
    <scope>NUCLEOTIDE SEQUENCE [LARGE SCALE GENOMIC DNA]</scope>
    <source>
        <strain>PCC 7120 / SAG 25.82 / UTEX 2576</strain>
    </source>
</reference>
<feature type="chain" id="PRO_0000138528" description="Peptide methionine sulfoxide reductase MsrA 2">
    <location>
        <begin position="1"/>
        <end position="222"/>
    </location>
</feature>
<feature type="active site" evidence="1">
    <location>
        <position position="56"/>
    </location>
</feature>
<dbReference type="EC" id="1.8.4.11"/>
<dbReference type="EMBL" id="BA000019">
    <property type="protein sequence ID" value="BAB78041.1"/>
    <property type="molecule type" value="Genomic_DNA"/>
</dbReference>
<dbReference type="PIR" id="AE2015">
    <property type="entry name" value="AE2015"/>
</dbReference>
<dbReference type="SMR" id="Q8YWD8"/>
<dbReference type="STRING" id="103690.gene:10493692"/>
<dbReference type="KEGG" id="ana:alr1675"/>
<dbReference type="eggNOG" id="COG0225">
    <property type="taxonomic scope" value="Bacteria"/>
</dbReference>
<dbReference type="OrthoDB" id="4174719at2"/>
<dbReference type="Proteomes" id="UP000002483">
    <property type="component" value="Chromosome"/>
</dbReference>
<dbReference type="GO" id="GO:0005737">
    <property type="term" value="C:cytoplasm"/>
    <property type="evidence" value="ECO:0007669"/>
    <property type="project" value="TreeGrafter"/>
</dbReference>
<dbReference type="GO" id="GO:0036456">
    <property type="term" value="F:L-methionine-(S)-S-oxide reductase activity"/>
    <property type="evidence" value="ECO:0007669"/>
    <property type="project" value="TreeGrafter"/>
</dbReference>
<dbReference type="GO" id="GO:0008113">
    <property type="term" value="F:peptide-methionine (S)-S-oxide reductase activity"/>
    <property type="evidence" value="ECO:0007669"/>
    <property type="project" value="UniProtKB-UniRule"/>
</dbReference>
<dbReference type="GO" id="GO:0034599">
    <property type="term" value="P:cellular response to oxidative stress"/>
    <property type="evidence" value="ECO:0007669"/>
    <property type="project" value="TreeGrafter"/>
</dbReference>
<dbReference type="GO" id="GO:0036211">
    <property type="term" value="P:protein modification process"/>
    <property type="evidence" value="ECO:0007669"/>
    <property type="project" value="UniProtKB-UniRule"/>
</dbReference>
<dbReference type="FunFam" id="3.30.1060.10:FF:000001">
    <property type="entry name" value="Peptide methionine sulfoxide reductase MsrA"/>
    <property type="match status" value="1"/>
</dbReference>
<dbReference type="Gene3D" id="3.30.1060.10">
    <property type="entry name" value="Peptide methionine sulphoxide reductase MsrA"/>
    <property type="match status" value="1"/>
</dbReference>
<dbReference type="HAMAP" id="MF_01401">
    <property type="entry name" value="MsrA"/>
    <property type="match status" value="1"/>
</dbReference>
<dbReference type="InterPro" id="IPR002569">
    <property type="entry name" value="Met_Sox_Rdtase_MsrA_dom"/>
</dbReference>
<dbReference type="InterPro" id="IPR036509">
    <property type="entry name" value="Met_Sox_Rdtase_MsrA_sf"/>
</dbReference>
<dbReference type="InterPro" id="IPR050162">
    <property type="entry name" value="MsrA_MetSO_reductase"/>
</dbReference>
<dbReference type="NCBIfam" id="TIGR00401">
    <property type="entry name" value="msrA"/>
    <property type="match status" value="1"/>
</dbReference>
<dbReference type="PANTHER" id="PTHR42799">
    <property type="entry name" value="MITOCHONDRIAL PEPTIDE METHIONINE SULFOXIDE REDUCTASE"/>
    <property type="match status" value="1"/>
</dbReference>
<dbReference type="PANTHER" id="PTHR42799:SF2">
    <property type="entry name" value="MITOCHONDRIAL PEPTIDE METHIONINE SULFOXIDE REDUCTASE"/>
    <property type="match status" value="1"/>
</dbReference>
<dbReference type="Pfam" id="PF01625">
    <property type="entry name" value="PMSR"/>
    <property type="match status" value="1"/>
</dbReference>
<dbReference type="SUPFAM" id="SSF55068">
    <property type="entry name" value="Peptide methionine sulfoxide reductase"/>
    <property type="match status" value="1"/>
</dbReference>
<gene>
    <name type="primary">msrA2</name>
    <name type="ordered locus">alr1675</name>
</gene>